<proteinExistence type="evidence at protein level"/>
<organism>
    <name type="scientific">Homo sapiens</name>
    <name type="common">Human</name>
    <dbReference type="NCBI Taxonomy" id="9606"/>
    <lineage>
        <taxon>Eukaryota</taxon>
        <taxon>Metazoa</taxon>
        <taxon>Chordata</taxon>
        <taxon>Craniata</taxon>
        <taxon>Vertebrata</taxon>
        <taxon>Euteleostomi</taxon>
        <taxon>Mammalia</taxon>
        <taxon>Eutheria</taxon>
        <taxon>Euarchontoglires</taxon>
        <taxon>Primates</taxon>
        <taxon>Haplorrhini</taxon>
        <taxon>Catarrhini</taxon>
        <taxon>Hominidae</taxon>
        <taxon>Homo</taxon>
    </lineage>
</organism>
<evidence type="ECO:0000250" key="1">
    <source>
        <dbReference type="UniProtKB" id="Q8R1B4"/>
    </source>
</evidence>
<evidence type="ECO:0000255" key="2">
    <source>
        <dbReference type="HAMAP-Rule" id="MF_03002"/>
    </source>
</evidence>
<evidence type="ECO:0000255" key="3">
    <source>
        <dbReference type="PROSITE-ProRule" id="PRU01185"/>
    </source>
</evidence>
<evidence type="ECO:0000256" key="4">
    <source>
        <dbReference type="SAM" id="MobiDB-lite"/>
    </source>
</evidence>
<evidence type="ECO:0000269" key="5">
    <source>
    </source>
</evidence>
<evidence type="ECO:0000269" key="6">
    <source>
    </source>
</evidence>
<evidence type="ECO:0000269" key="7">
    <source>
    </source>
</evidence>
<evidence type="ECO:0000269" key="8">
    <source>
    </source>
</evidence>
<evidence type="ECO:0000269" key="9">
    <source>
    </source>
</evidence>
<evidence type="ECO:0000269" key="10">
    <source>
    </source>
</evidence>
<evidence type="ECO:0000269" key="11">
    <source>
    </source>
</evidence>
<evidence type="ECO:0000269" key="12">
    <source>
    </source>
</evidence>
<evidence type="ECO:0000269" key="13">
    <source>
    </source>
</evidence>
<evidence type="ECO:0000269" key="14">
    <source>
    </source>
</evidence>
<evidence type="ECO:0000269" key="15">
    <source>
    </source>
</evidence>
<evidence type="ECO:0000269" key="16">
    <source>
    </source>
</evidence>
<evidence type="ECO:0000269" key="17">
    <source>
    </source>
</evidence>
<evidence type="ECO:0000269" key="18">
    <source>
    </source>
</evidence>
<evidence type="ECO:0000303" key="19">
    <source>
    </source>
</evidence>
<evidence type="ECO:0000305" key="20"/>
<evidence type="ECO:0007829" key="21">
    <source>
        <dbReference type="PDB" id="6YBD"/>
    </source>
</evidence>
<evidence type="ECO:0007829" key="22">
    <source>
        <dbReference type="PDB" id="6YBW"/>
    </source>
</evidence>
<evidence type="ECO:0007829" key="23">
    <source>
        <dbReference type="PDB" id="8RG0"/>
    </source>
</evidence>
<protein>
    <recommendedName>
        <fullName evidence="2">Eukaryotic translation initiation factor 3 subunit C</fullName>
        <shortName evidence="2">eIF3c</shortName>
    </recommendedName>
    <alternativeName>
        <fullName evidence="2">Eukaryotic translation initiation factor 3 subunit 8</fullName>
    </alternativeName>
    <alternativeName>
        <fullName evidence="2">eIF3 p110</fullName>
    </alternativeName>
</protein>
<comment type="function">
    <text evidence="2 12 16 17">Component of the eukaryotic translation initiation factor 3 (eIF-3) complex, which is required for several steps in the initiation of protein synthesis (PubMed:17581632, PubMed:25849773, PubMed:27462815). The eIF-3 complex associates with the 40S ribosome and facilitates the recruitment of eIF-1, eIF-1A, eIF-2:GTP:methionyl-tRNAi and eIF-5 to form the 43S pre-initiation complex (43S PIC). The eIF-3 complex stimulates mRNA recruitment to the 43S PIC and scanning of the mRNA for AUG recognition. The eIF-3 complex is also required for disassembly and recycling of post-termination ribosomal complexes and subsequently prevents premature joining of the 40S and 60S ribosomal subunits prior to initiation (PubMed:17581632). The eIF-3 complex specifically targets and initiates translation of a subset of mRNAs involved in cell proliferation, including cell cycling, differentiation and apoptosis, and uses different modes of RNA stem-loop binding to exert either translational activation or repression (PubMed:25849773).</text>
</comment>
<comment type="subunit">
    <text evidence="2 5 6 7 8 9 10 11 13 14 15 16 18">Component of the eukaryotic translation initiation factor 3 (eIF-3) complex, which is composed of 13 subunits: EIF3A, EIF3B, EIF3C, EIF3D, EIF3E, EIF3F, EIF3G, EIF3H, EIF3I, EIF3J, EIF3K, EIF3L and EIF3M. The eIF-3 complex appears to include 3 stable modules: module A is composed of EIF3A, EIF3B, EIF3G and EIF3I; module B is composed of EIF3F, EIF3H, and EIF3M; and module C is composed of EIF3C, EIF3D, EIF3E, EIF3K and EIF3L. EIF3C of module C binds EIF3B of module A and EIF3H of module B, thereby linking the three modules. EIF3J is a labile subunit that binds to the eIF-3 complex via EIF3B. The eIF-3 complex interacts with RPS6KB1 under conditions of nutrient depletion. Mitogenic stimulation leads to binding and activation of a complex composed of MTOR and RPTOR, leading to phosphorylation and release of RPS6KB1 and binding of EIF4B to eIF-3. Identified in a HCV IRES-mediated translation complex, at least composed of EIF3C, IGF2BP1, RPS3 and HCV RNA-replicon. Interacts with ALKBH4, IFIT1 and IFIT2. Interacts with BZW2/5MP1 (PubMed:34260931).</text>
</comment>
<comment type="interaction">
    <interactant intactId="EBI-353741">
        <id>Q99613</id>
    </interactant>
    <interactant intactId="EBI-353779">
        <id>O00571</id>
        <label>DDX3X</label>
    </interactant>
    <organismsDiffer>false</organismsDiffer>
    <experiments>3</experiments>
</comment>
<comment type="interaction">
    <interactant intactId="EBI-353741">
        <id>Q99613</id>
    </interactant>
    <interactant intactId="EBI-726200">
        <id>P41567</id>
        <label>EIF1</label>
    </interactant>
    <organismsDiffer>false</organismsDiffer>
    <experiments>2</experiments>
</comment>
<comment type="interaction">
    <interactant intactId="EBI-353741">
        <id>Q99613</id>
    </interactant>
    <interactant intactId="EBI-1045377">
        <id>P47813</id>
        <label>EIF1AX</label>
    </interactant>
    <organismsDiffer>false</organismsDiffer>
    <experiments>2</experiments>
</comment>
<comment type="interaction">
    <interactant intactId="EBI-353741">
        <id>Q99613</id>
    </interactant>
    <interactant intactId="EBI-366617">
        <id>Q14152</id>
        <label>EIF3A</label>
    </interactant>
    <organismsDiffer>false</organismsDiffer>
    <experiments>16</experiments>
</comment>
<comment type="interaction">
    <interactant intactId="EBI-353741">
        <id>Q99613</id>
    </interactant>
    <interactant intactId="EBI-347740">
        <id>P60228</id>
        <label>EIF3E</label>
    </interactant>
    <organismsDiffer>false</organismsDiffer>
    <experiments>16</experiments>
</comment>
<comment type="interaction">
    <interactant intactId="EBI-353741">
        <id>Q99613</id>
    </interactant>
    <interactant intactId="EBI-742388">
        <id>Q9H8W4</id>
        <label>PLEKHF2</label>
    </interactant>
    <organismsDiffer>false</organismsDiffer>
    <experiments>3</experiments>
</comment>
<comment type="interaction">
    <interactant intactId="EBI-353741">
        <id>Q99613</id>
    </interactant>
    <interactant intactId="EBI-10175863">
        <id>Q05086-2</id>
        <label>UBE3A</label>
    </interactant>
    <organismsDiffer>false</organismsDiffer>
    <experiments>2</experiments>
</comment>
<comment type="interaction">
    <interactant intactId="EBI-353741">
        <id>Q99613</id>
    </interactant>
    <interactant intactId="EBI-6248094">
        <id>Q9Q2G4</id>
        <label>ORF</label>
    </interactant>
    <organismsDiffer>true</organismsDiffer>
    <experiments>5</experiments>
</comment>
<comment type="subcellular location">
    <subcellularLocation>
        <location evidence="2">Cytoplasm</location>
    </subcellularLocation>
</comment>
<comment type="alternative products">
    <event type="alternative splicing"/>
    <isoform>
        <id>Q99613-1</id>
        <name>1</name>
        <sequence type="displayed"/>
    </isoform>
    <isoform>
        <id>Q99613-2</id>
        <name>2</name>
        <sequence type="described" ref="VSP_055472"/>
    </isoform>
</comment>
<comment type="PTM">
    <text evidence="2 10">Phosphorylated. Phosphorylation is enhanced upon serum stimulation.</text>
</comment>
<comment type="mass spectrometry" mass="106143.8" method="Unknown" evidence="10"/>
<comment type="mass spectrometry" mass="106855.0" error="40.0" method="MALDI" evidence="13"/>
<comment type="similarity">
    <text evidence="2">Belongs to the eIF-3 subunit C family.</text>
</comment>
<comment type="online information" name="Atlas of Genetics and Cytogenetics in Oncology and Haematology">
    <link uri="https://atlasgeneticsoncology.org/gene/44187/EIF3C"/>
</comment>
<dbReference type="EMBL" id="U46025">
    <property type="protein sequence ID" value="AAD03462.1"/>
    <property type="molecule type" value="Genomic_DNA"/>
</dbReference>
<dbReference type="EMBL" id="AC002544">
    <property type="protein sequence ID" value="AAC27426.1"/>
    <property type="molecule type" value="Genomic_DNA"/>
</dbReference>
<dbReference type="EMBL" id="U91326">
    <property type="protein sequence ID" value="AAC27674.1"/>
    <property type="molecule type" value="Genomic_DNA"/>
</dbReference>
<dbReference type="EMBL" id="AK000739">
    <property type="protein sequence ID" value="BAA91352.1"/>
    <property type="molecule type" value="mRNA"/>
</dbReference>
<dbReference type="EMBL" id="AK292155">
    <property type="protein sequence ID" value="BAF84844.1"/>
    <property type="molecule type" value="mRNA"/>
</dbReference>
<dbReference type="EMBL" id="AK303790">
    <property type="protein sequence ID" value="BAG64747.1"/>
    <property type="molecule type" value="mRNA"/>
</dbReference>
<dbReference type="EMBL" id="AC145285">
    <property type="status" value="NOT_ANNOTATED_CDS"/>
    <property type="molecule type" value="Genomic_DNA"/>
</dbReference>
<dbReference type="EMBL" id="BC000533">
    <property type="protein sequence ID" value="AAH00533.1"/>
    <property type="molecule type" value="mRNA"/>
</dbReference>
<dbReference type="EMBL" id="BC001571">
    <property type="protein sequence ID" value="AAH01571.1"/>
    <property type="molecule type" value="mRNA"/>
</dbReference>
<dbReference type="EMBL" id="BC071705">
    <property type="protein sequence ID" value="AAH71705.1"/>
    <property type="molecule type" value="mRNA"/>
</dbReference>
<dbReference type="EMBL" id="BC157842">
    <property type="protein sequence ID" value="AAI57843.1"/>
    <property type="molecule type" value="mRNA"/>
</dbReference>
<dbReference type="EMBL" id="BC157849">
    <property type="protein sequence ID" value="AAI57850.1"/>
    <property type="molecule type" value="mRNA"/>
</dbReference>
<dbReference type="EMBL" id="CH878380">
    <property type="protein sequence ID" value="EAW50492.1"/>
    <property type="molecule type" value="Genomic_DNA"/>
</dbReference>
<dbReference type="EMBL" id="BT007335">
    <property type="protein sequence ID" value="AAP35999.1"/>
    <property type="molecule type" value="mRNA"/>
</dbReference>
<dbReference type="CCDS" id="CCDS10638.1">
    <molecule id="Q99613-1"/>
</dbReference>
<dbReference type="CCDS" id="CCDS66993.1">
    <molecule id="Q99613-2"/>
</dbReference>
<dbReference type="RefSeq" id="NP_001032897.1">
    <molecule id="Q99613-1"/>
    <property type="nucleotide sequence ID" value="NM_001037808.2"/>
</dbReference>
<dbReference type="RefSeq" id="NP_001186071.1">
    <molecule id="Q99613-1"/>
    <property type="nucleotide sequence ID" value="NM_001199142.1"/>
</dbReference>
<dbReference type="RefSeq" id="NP_001254503.1">
    <molecule id="Q99613-1"/>
    <property type="nucleotide sequence ID" value="NM_001267574.2"/>
</dbReference>
<dbReference type="RefSeq" id="NP_001273407.1">
    <molecule id="Q99613-2"/>
    <property type="nucleotide sequence ID" value="NM_001286478.1"/>
</dbReference>
<dbReference type="RefSeq" id="NP_003743.1">
    <molecule id="Q99613-1"/>
    <property type="nucleotide sequence ID" value="NM_003752.5"/>
</dbReference>
<dbReference type="RefSeq" id="XP_047290783.1">
    <molecule id="Q99613-1"/>
    <property type="nucleotide sequence ID" value="XM_047434827.1"/>
</dbReference>
<dbReference type="RefSeq" id="XP_047290784.1">
    <molecule id="Q99613-1"/>
    <property type="nucleotide sequence ID" value="XM_047434828.1"/>
</dbReference>
<dbReference type="RefSeq" id="XP_054170224.1">
    <molecule id="Q99613-1"/>
    <property type="nucleotide sequence ID" value="XM_054314249.1"/>
</dbReference>
<dbReference type="PDB" id="3J8B">
    <property type="method" value="EM"/>
    <property type="chains" value="C=326-846"/>
</dbReference>
<dbReference type="PDB" id="3J8C">
    <property type="method" value="EM"/>
    <property type="chains" value="C=326-846"/>
</dbReference>
<dbReference type="PDB" id="6YBD">
    <property type="method" value="EM"/>
    <property type="resolution" value="3.30 A"/>
    <property type="chains" value="y=1-913"/>
</dbReference>
<dbReference type="PDB" id="6YBW">
    <property type="method" value="EM"/>
    <property type="resolution" value="3.10 A"/>
    <property type="chains" value="y=1-913"/>
</dbReference>
<dbReference type="PDB" id="6ZMW">
    <property type="method" value="EM"/>
    <property type="resolution" value="3.70 A"/>
    <property type="chains" value="y=1-913"/>
</dbReference>
<dbReference type="PDB" id="6ZON">
    <property type="method" value="EM"/>
    <property type="resolution" value="3.00 A"/>
    <property type="chains" value="C=1-913"/>
</dbReference>
<dbReference type="PDB" id="6ZP4">
    <property type="method" value="EM"/>
    <property type="resolution" value="2.90 A"/>
    <property type="chains" value="C=1-913"/>
</dbReference>
<dbReference type="PDB" id="7A09">
    <property type="method" value="EM"/>
    <property type="resolution" value="3.50 A"/>
    <property type="chains" value="C=1-913"/>
</dbReference>
<dbReference type="PDB" id="7QP6">
    <property type="method" value="EM"/>
    <property type="resolution" value="4.70 A"/>
    <property type="chains" value="y=1-913"/>
</dbReference>
<dbReference type="PDB" id="7QP7">
    <property type="method" value="EM"/>
    <property type="resolution" value="3.70 A"/>
    <property type="chains" value="y=1-913"/>
</dbReference>
<dbReference type="PDB" id="8OZ0">
    <property type="method" value="EM"/>
    <property type="resolution" value="3.50 A"/>
    <property type="chains" value="J=1-913"/>
</dbReference>
<dbReference type="PDB" id="8PJ1">
    <property type="method" value="EM"/>
    <property type="resolution" value="3.40 A"/>
    <property type="chains" value="y=1-913"/>
</dbReference>
<dbReference type="PDB" id="8PJ2">
    <property type="method" value="EM"/>
    <property type="resolution" value="3.40 A"/>
    <property type="chains" value="y=1-913"/>
</dbReference>
<dbReference type="PDB" id="8PJ3">
    <property type="method" value="EM"/>
    <property type="resolution" value="3.70 A"/>
    <property type="chains" value="y=1-913"/>
</dbReference>
<dbReference type="PDB" id="8PJ4">
    <property type="method" value="EM"/>
    <property type="resolution" value="3.20 A"/>
    <property type="chains" value="y=1-913"/>
</dbReference>
<dbReference type="PDB" id="8PJ5">
    <property type="method" value="EM"/>
    <property type="resolution" value="2.90 A"/>
    <property type="chains" value="y=1-913"/>
</dbReference>
<dbReference type="PDB" id="8PJ6">
    <property type="method" value="EM"/>
    <property type="resolution" value="2.90 A"/>
    <property type="chains" value="y=1-913"/>
</dbReference>
<dbReference type="PDB" id="8PPL">
    <property type="method" value="EM"/>
    <property type="resolution" value="2.65 A"/>
    <property type="chains" value="Iy=1-913"/>
</dbReference>
<dbReference type="PDB" id="8RG0">
    <property type="method" value="EM"/>
    <property type="resolution" value="3.40 A"/>
    <property type="chains" value="y=1-913"/>
</dbReference>
<dbReference type="PDB" id="8XXN">
    <property type="method" value="EM"/>
    <property type="resolution" value="3.60 A"/>
    <property type="chains" value="3C=1-913"/>
</dbReference>
<dbReference type="PDB" id="9BLN">
    <property type="method" value="EM"/>
    <property type="resolution" value="3.90 A"/>
    <property type="chains" value="y=1-913"/>
</dbReference>
<dbReference type="PDBsum" id="3J8B"/>
<dbReference type="PDBsum" id="3J8C"/>
<dbReference type="PDBsum" id="6YBD"/>
<dbReference type="PDBsum" id="6YBW"/>
<dbReference type="PDBsum" id="6ZMW"/>
<dbReference type="PDBsum" id="6ZON"/>
<dbReference type="PDBsum" id="6ZP4"/>
<dbReference type="PDBsum" id="7A09"/>
<dbReference type="PDBsum" id="7QP6"/>
<dbReference type="PDBsum" id="7QP7"/>
<dbReference type="PDBsum" id="8OZ0"/>
<dbReference type="PDBsum" id="8PJ1"/>
<dbReference type="PDBsum" id="8PJ2"/>
<dbReference type="PDBsum" id="8PJ3"/>
<dbReference type="PDBsum" id="8PJ4"/>
<dbReference type="PDBsum" id="8PJ5"/>
<dbReference type="PDBsum" id="8PJ6"/>
<dbReference type="PDBsum" id="8PPL"/>
<dbReference type="PDBsum" id="8RG0"/>
<dbReference type="PDBsum" id="8XXN"/>
<dbReference type="PDBsum" id="9BLN"/>
<dbReference type="EMDB" id="EMD-10769"/>
<dbReference type="EMDB" id="EMD-10775"/>
<dbReference type="EMDB" id="EMD-11302"/>
<dbReference type="EMDB" id="EMD-11325"/>
<dbReference type="EMDB" id="EMD-11335"/>
<dbReference type="EMDB" id="EMD-11602"/>
<dbReference type="EMDB" id="EMD-14113"/>
<dbReference type="EMDB" id="EMD-14114"/>
<dbReference type="EMDB" id="EMD-17297"/>
<dbReference type="EMDB" id="EMD-17696"/>
<dbReference type="EMDB" id="EMD-17697"/>
<dbReference type="EMDB" id="EMD-17698"/>
<dbReference type="EMDB" id="EMD-17699"/>
<dbReference type="EMDB" id="EMD-17700"/>
<dbReference type="EMDB" id="EMD-17701"/>
<dbReference type="EMDB" id="EMD-17805"/>
<dbReference type="EMDB" id="EMD-19128"/>
<dbReference type="EMDB" id="EMD-38754"/>
<dbReference type="EMDB" id="EMD-44671"/>
<dbReference type="SMR" id="Q99613"/>
<dbReference type="BioGRID" id="114212">
    <property type="interactions" value="283"/>
</dbReference>
<dbReference type="ComplexPortal" id="CPX-6036">
    <property type="entry name" value="Eukaryotic translation initiation factor 3 complex"/>
</dbReference>
<dbReference type="CORUM" id="Q99613"/>
<dbReference type="DIP" id="DIP-32865N"/>
<dbReference type="FunCoup" id="Q99613">
    <property type="interactions" value="657"/>
</dbReference>
<dbReference type="IntAct" id="Q99613">
    <property type="interactions" value="120"/>
</dbReference>
<dbReference type="MINT" id="Q99613"/>
<dbReference type="STRING" id="9606.ENSP00000332604"/>
<dbReference type="GlyGen" id="Q99613">
    <property type="glycosylation" value="1 site, 1 O-linked glycan (1 site)"/>
</dbReference>
<dbReference type="iPTMnet" id="Q99613"/>
<dbReference type="PhosphoSitePlus" id="Q99613"/>
<dbReference type="SwissPalm" id="Q99613"/>
<dbReference type="BioMuta" id="EIF3C"/>
<dbReference type="DMDM" id="6685539"/>
<dbReference type="jPOST" id="Q99613"/>
<dbReference type="MassIVE" id="Q99613"/>
<dbReference type="PaxDb" id="9606-ENSP00000332604"/>
<dbReference type="PeptideAtlas" id="Q99613"/>
<dbReference type="ProteomicsDB" id="42171"/>
<dbReference type="ProteomicsDB" id="78357">
    <molecule id="Q99613-1"/>
</dbReference>
<dbReference type="Pumba" id="Q99613"/>
<dbReference type="Antibodypedia" id="26523">
    <property type="antibodies" value="254 antibodies from 27 providers"/>
</dbReference>
<dbReference type="DNASU" id="8663"/>
<dbReference type="Ensembl" id="ENST00000331666.11">
    <molecule id="Q99613-1"/>
    <property type="protein sequence ID" value="ENSP00000332604.7"/>
    <property type="gene ID" value="ENSG00000184110.15"/>
</dbReference>
<dbReference type="Ensembl" id="ENST00000395587.5">
    <molecule id="Q99613-1"/>
    <property type="protein sequence ID" value="ENSP00000378953.1"/>
    <property type="gene ID" value="ENSG00000184110.15"/>
</dbReference>
<dbReference type="Ensembl" id="ENST00000564243.5">
    <molecule id="Q99613-2"/>
    <property type="protein sequence ID" value="ENSP00000456416.1"/>
    <property type="gene ID" value="ENSG00000184110.15"/>
</dbReference>
<dbReference type="Ensembl" id="ENST00000566501.5">
    <molecule id="Q99613-1"/>
    <property type="protein sequence ID" value="ENSP00000457963.1"/>
    <property type="gene ID" value="ENSG00000184110.15"/>
</dbReference>
<dbReference type="Ensembl" id="ENST00000566866.5">
    <molecule id="Q99613-1"/>
    <property type="protein sequence ID" value="ENSP00000457418.1"/>
    <property type="gene ID" value="ENSG00000184110.15"/>
</dbReference>
<dbReference type="GeneID" id="8663"/>
<dbReference type="KEGG" id="hsa:8663"/>
<dbReference type="MANE-Select" id="ENST00000331666.11">
    <property type="protein sequence ID" value="ENSP00000332604.7"/>
    <property type="RefSeq nucleotide sequence ID" value="NM_003752.5"/>
    <property type="RefSeq protein sequence ID" value="NP_003743.1"/>
</dbReference>
<dbReference type="UCSC" id="uc002dqs.6">
    <molecule id="Q99613-1"/>
    <property type="organism name" value="human"/>
</dbReference>
<dbReference type="AGR" id="HGNC:3279"/>
<dbReference type="CTD" id="8663"/>
<dbReference type="DisGeNET" id="8663"/>
<dbReference type="GeneCards" id="EIF3C"/>
<dbReference type="HGNC" id="HGNC:3279">
    <property type="gene designation" value="EIF3C"/>
</dbReference>
<dbReference type="HPA" id="ENSG00000184110">
    <property type="expression patterns" value="Low tissue specificity"/>
</dbReference>
<dbReference type="MIM" id="603916">
    <property type="type" value="gene"/>
</dbReference>
<dbReference type="neXtProt" id="NX_Q99613"/>
<dbReference type="OpenTargets" id="ENSG00000184110"/>
<dbReference type="PharmGKB" id="PA162384646"/>
<dbReference type="VEuPathDB" id="HostDB:ENSG00000184110"/>
<dbReference type="eggNOG" id="KOG1076">
    <property type="taxonomic scope" value="Eukaryota"/>
</dbReference>
<dbReference type="GeneTree" id="ENSGT00390000017900"/>
<dbReference type="HOGENOM" id="CLU_004304_0_0_1"/>
<dbReference type="InParanoid" id="Q99613"/>
<dbReference type="OMA" id="GMITEAH"/>
<dbReference type="OrthoDB" id="29647at2759"/>
<dbReference type="PAN-GO" id="Q99613">
    <property type="GO annotations" value="4 GO annotations based on evolutionary models"/>
</dbReference>
<dbReference type="PhylomeDB" id="Q99613"/>
<dbReference type="TreeFam" id="TF101520"/>
<dbReference type="PathwayCommons" id="Q99613"/>
<dbReference type="Reactome" id="R-HSA-156827">
    <property type="pathway name" value="L13a-mediated translational silencing of Ceruloplasmin expression"/>
</dbReference>
<dbReference type="Reactome" id="R-HSA-72649">
    <property type="pathway name" value="Translation initiation complex formation"/>
</dbReference>
<dbReference type="Reactome" id="R-HSA-72689">
    <property type="pathway name" value="Formation of a pool of free 40S subunits"/>
</dbReference>
<dbReference type="Reactome" id="R-HSA-72695">
    <property type="pathway name" value="Formation of the ternary complex, and subsequently, the 43S complex"/>
</dbReference>
<dbReference type="Reactome" id="R-HSA-72702">
    <property type="pathway name" value="Ribosomal scanning and start codon recognition"/>
</dbReference>
<dbReference type="Reactome" id="R-HSA-72706">
    <property type="pathway name" value="GTP hydrolysis and joining of the 60S ribosomal subunit"/>
</dbReference>
<dbReference type="SignaLink" id="Q99613"/>
<dbReference type="SIGNOR" id="Q99613"/>
<dbReference type="BioGRID-ORCS" id="8663">
    <property type="hits" value="334 hits in 988 CRISPR screens"/>
</dbReference>
<dbReference type="CD-CODE" id="DEE660B4">
    <property type="entry name" value="Stress granule"/>
</dbReference>
<dbReference type="ChiTaRS" id="EIF3C">
    <property type="organism name" value="human"/>
</dbReference>
<dbReference type="EvolutionaryTrace" id="Q99613"/>
<dbReference type="GeneWiki" id="EIF3C"/>
<dbReference type="GenomeRNAi" id="8663"/>
<dbReference type="Pharos" id="Q99613">
    <property type="development level" value="Tbio"/>
</dbReference>
<dbReference type="PRO" id="PR:Q99613"/>
<dbReference type="Proteomes" id="UP000005640">
    <property type="component" value="Chromosome 16"/>
</dbReference>
<dbReference type="RNAct" id="Q99613">
    <property type="molecule type" value="protein"/>
</dbReference>
<dbReference type="Bgee" id="ENSG00000184110">
    <property type="expression patterns" value="Expressed in right uterine tube and 136 other cell types or tissues"/>
</dbReference>
<dbReference type="ExpressionAtlas" id="Q99613">
    <property type="expression patterns" value="baseline and differential"/>
</dbReference>
<dbReference type="GO" id="GO:0005829">
    <property type="term" value="C:cytosol"/>
    <property type="evidence" value="ECO:0000304"/>
    <property type="project" value="Reactome"/>
</dbReference>
<dbReference type="GO" id="GO:0016282">
    <property type="term" value="C:eukaryotic 43S preinitiation complex"/>
    <property type="evidence" value="ECO:0007669"/>
    <property type="project" value="UniProtKB-UniRule"/>
</dbReference>
<dbReference type="GO" id="GO:0033290">
    <property type="term" value="C:eukaryotic 48S preinitiation complex"/>
    <property type="evidence" value="ECO:0007669"/>
    <property type="project" value="UniProtKB-UniRule"/>
</dbReference>
<dbReference type="GO" id="GO:0005852">
    <property type="term" value="C:eukaryotic translation initiation factor 3 complex"/>
    <property type="evidence" value="ECO:0000314"/>
    <property type="project" value="UniProtKB"/>
</dbReference>
<dbReference type="GO" id="GO:0043022">
    <property type="term" value="F:ribosome binding"/>
    <property type="evidence" value="ECO:0000314"/>
    <property type="project" value="MGI"/>
</dbReference>
<dbReference type="GO" id="GO:0003723">
    <property type="term" value="F:RNA binding"/>
    <property type="evidence" value="ECO:0007005"/>
    <property type="project" value="UniProtKB"/>
</dbReference>
<dbReference type="GO" id="GO:0003743">
    <property type="term" value="F:translation initiation factor activity"/>
    <property type="evidence" value="ECO:0007669"/>
    <property type="project" value="UniProtKB-UniRule"/>
</dbReference>
<dbReference type="GO" id="GO:0031369">
    <property type="term" value="F:translation initiation factor binding"/>
    <property type="evidence" value="ECO:0000318"/>
    <property type="project" value="GO_Central"/>
</dbReference>
<dbReference type="GO" id="GO:0001732">
    <property type="term" value="P:formation of cytoplasmic translation initiation complex"/>
    <property type="evidence" value="ECO:0000303"/>
    <property type="project" value="ComplexPortal"/>
</dbReference>
<dbReference type="GO" id="GO:1902416">
    <property type="term" value="P:positive regulation of mRNA binding"/>
    <property type="evidence" value="ECO:0000353"/>
    <property type="project" value="ParkinsonsUK-UCL"/>
</dbReference>
<dbReference type="GO" id="GO:0045727">
    <property type="term" value="P:positive regulation of translation"/>
    <property type="evidence" value="ECO:0000353"/>
    <property type="project" value="ParkinsonsUK-UCL"/>
</dbReference>
<dbReference type="GO" id="GO:0006413">
    <property type="term" value="P:translational initiation"/>
    <property type="evidence" value="ECO:0000314"/>
    <property type="project" value="UniProtKB"/>
</dbReference>
<dbReference type="FunFam" id="1.10.10.10:FF:000461">
    <property type="entry name" value="Eukaryotic translation initiation factor 3 subunit C"/>
    <property type="match status" value="1"/>
</dbReference>
<dbReference type="Gene3D" id="1.10.10.10">
    <property type="entry name" value="Winged helix-like DNA-binding domain superfamily/Winged helix DNA-binding domain"/>
    <property type="match status" value="1"/>
</dbReference>
<dbReference type="HAMAP" id="MF_03002">
    <property type="entry name" value="eIF3c"/>
    <property type="match status" value="1"/>
</dbReference>
<dbReference type="InterPro" id="IPR027516">
    <property type="entry name" value="EIF3C"/>
</dbReference>
<dbReference type="InterPro" id="IPR008905">
    <property type="entry name" value="EIF3C_N_dom"/>
</dbReference>
<dbReference type="InterPro" id="IPR000717">
    <property type="entry name" value="PCI_dom"/>
</dbReference>
<dbReference type="InterPro" id="IPR036388">
    <property type="entry name" value="WH-like_DNA-bd_sf"/>
</dbReference>
<dbReference type="InterPro" id="IPR036390">
    <property type="entry name" value="WH_DNA-bd_sf"/>
</dbReference>
<dbReference type="PANTHER" id="PTHR13937">
    <property type="entry name" value="EUKARYOTIC TRANSLATION INITATION FACTOR 3, SUBUNIT 8 EIF3S8 -RELATED"/>
    <property type="match status" value="1"/>
</dbReference>
<dbReference type="PANTHER" id="PTHR13937:SF0">
    <property type="entry name" value="EUKARYOTIC TRANSLATION INITIATION FACTOR 3 SUBUNIT C-RELATED"/>
    <property type="match status" value="1"/>
</dbReference>
<dbReference type="Pfam" id="PF05470">
    <property type="entry name" value="eIF-3c_N"/>
    <property type="match status" value="1"/>
</dbReference>
<dbReference type="Pfam" id="PF01399">
    <property type="entry name" value="PCI"/>
    <property type="match status" value="1"/>
</dbReference>
<dbReference type="SMART" id="SM00088">
    <property type="entry name" value="PINT"/>
    <property type="match status" value="1"/>
</dbReference>
<dbReference type="SUPFAM" id="SSF46785">
    <property type="entry name" value="Winged helix' DNA-binding domain"/>
    <property type="match status" value="1"/>
</dbReference>
<dbReference type="PROSITE" id="PS50250">
    <property type="entry name" value="PCI"/>
    <property type="match status" value="1"/>
</dbReference>
<name>EIF3C_HUMAN</name>
<sequence length="913" mass="105344">MSRFFTTGSDSESESSLSGEELVTKPVGGNYGKQPLLLSEDEEDTKRVVRSAKDKRFEELTNLIRTIRNAMKIRDVTKCLEEFELLGKAYGKAKSIVDKEGVPRFYIRILADLEDYLNELWEDKEGKKKMNKNNAKALSTLRQKIRKYNRDFESHITSYKQNPEQSADEDAEKNEEDSEGSSDEDEDEDGVSAATFLKKKSEAPSGESRKFLKKMDDEDEDSEDSEDDEDWDTGSTSSDSDSEEEEGKQTALASRFLKKAPTTDEDKKAAEKKREDKAKKKHDRKSKRLDEEEEDNEGGEWERVRGGVPLVKEKPKMFAKGTEITHAVVIKKLNEILQARGKKGTDRAAQIELLQLLVQIAAENNLGEGVIVKIKFNIIASLYDYNPNLATYMKPEMWGKCLDCINELMDILFANPNIFVGENILEESENLHNADQPLRVRGCILTLVERMDEEFTKIMQNTDPHSQEYVEHLKDEAQVCAIIERVQRYLEEKGTTEEVCRIYLLRILHTYYKFDYKAHQRQLTPPEGSSKSEQDQAENEGEDSAVLMERLCKYIYAKDRTDRIRTCAILCHIYHHALHSRWYQARDLMLMSHLQDNIQHADPPVQILYNRTMVQLGICAFRQGLTKDAHNALLDIQSSGRAKELLGQGLLLRSLQERNQEQEKVERRRQVPFHLHINLELLECVYLVSAMLLEIPYMAAHESDARRRMISKQFHHQLRVGERQPLLGPPESMREHVVAASKAMKMGDWKTCHSFIINEKMNGKVWDLFPEADKVRTMLVRKIQEESLRTYLFTYSSVYDSISMETLSDMFELDLPTVHSIISKMIINEELMASLDQPTQTVVMHRTEPTAQQNLALQLAEKLGSLVENNERVFDHKQGTYGGYFRDQKDGYRKNEGYMRRGGYRQQQSQTAY</sequence>
<keyword id="KW-0002">3D-structure</keyword>
<keyword id="KW-0007">Acetylation</keyword>
<keyword id="KW-0025">Alternative splicing</keyword>
<keyword id="KW-0963">Cytoplasm</keyword>
<keyword id="KW-0396">Initiation factor</keyword>
<keyword id="KW-0597">Phosphoprotein</keyword>
<keyword id="KW-0648">Protein biosynthesis</keyword>
<keyword id="KW-1267">Proteomics identification</keyword>
<keyword id="KW-1185">Reference proteome</keyword>
<reference key="1">
    <citation type="journal article" date="1997" name="J. Biol. Chem.">
        <title>Conservation and diversity of eukaryotic translation initiation factor eIF3.</title>
        <authorList>
            <person name="Asano K."/>
            <person name="Kinzy T.G."/>
            <person name="Merrick W.C."/>
            <person name="Hershey J.W.B."/>
        </authorList>
    </citation>
    <scope>NUCLEOTIDE SEQUENCE [GENOMIC DNA]</scope>
</reference>
<reference key="2">
    <citation type="journal article" date="1999" name="Genomics">
        <title>Genome duplications and other features in 12 Mb of DNA sequence from human chromosome 16p and 16q.</title>
        <authorList>
            <person name="Loftus B.J."/>
            <person name="Kim U.-J."/>
            <person name="Sneddon V.P."/>
            <person name="Kalush F."/>
            <person name="Brandon R."/>
            <person name="Fuhrmann J."/>
            <person name="Mason T."/>
            <person name="Crosby M.L."/>
            <person name="Barnstead M."/>
            <person name="Cronin L."/>
            <person name="Mays A.D."/>
            <person name="Cao Y."/>
            <person name="Xu R.X."/>
            <person name="Kang H.-L."/>
            <person name="Mitchell S."/>
            <person name="Eichler E.E."/>
            <person name="Harris P.C."/>
            <person name="Venter J.C."/>
            <person name="Adams M.D."/>
        </authorList>
    </citation>
    <scope>NUCLEOTIDE SEQUENCE [LARGE SCALE GENOMIC DNA]</scope>
</reference>
<reference key="3">
    <citation type="journal article" date="2004" name="Nat. Genet.">
        <title>Complete sequencing and characterization of 21,243 full-length human cDNAs.</title>
        <authorList>
            <person name="Ota T."/>
            <person name="Suzuki Y."/>
            <person name="Nishikawa T."/>
            <person name="Otsuki T."/>
            <person name="Sugiyama T."/>
            <person name="Irie R."/>
            <person name="Wakamatsu A."/>
            <person name="Hayashi K."/>
            <person name="Sato H."/>
            <person name="Nagai K."/>
            <person name="Kimura K."/>
            <person name="Makita H."/>
            <person name="Sekine M."/>
            <person name="Obayashi M."/>
            <person name="Nishi T."/>
            <person name="Shibahara T."/>
            <person name="Tanaka T."/>
            <person name="Ishii S."/>
            <person name="Yamamoto J."/>
            <person name="Saito K."/>
            <person name="Kawai Y."/>
            <person name="Isono Y."/>
            <person name="Nakamura Y."/>
            <person name="Nagahari K."/>
            <person name="Murakami K."/>
            <person name="Yasuda T."/>
            <person name="Iwayanagi T."/>
            <person name="Wagatsuma M."/>
            <person name="Shiratori A."/>
            <person name="Sudo H."/>
            <person name="Hosoiri T."/>
            <person name="Kaku Y."/>
            <person name="Kodaira H."/>
            <person name="Kondo H."/>
            <person name="Sugawara M."/>
            <person name="Takahashi M."/>
            <person name="Kanda K."/>
            <person name="Yokoi T."/>
            <person name="Furuya T."/>
            <person name="Kikkawa E."/>
            <person name="Omura Y."/>
            <person name="Abe K."/>
            <person name="Kamihara K."/>
            <person name="Katsuta N."/>
            <person name="Sato K."/>
            <person name="Tanikawa M."/>
            <person name="Yamazaki M."/>
            <person name="Ninomiya K."/>
            <person name="Ishibashi T."/>
            <person name="Yamashita H."/>
            <person name="Murakawa K."/>
            <person name="Fujimori K."/>
            <person name="Tanai H."/>
            <person name="Kimata M."/>
            <person name="Watanabe M."/>
            <person name="Hiraoka S."/>
            <person name="Chiba Y."/>
            <person name="Ishida S."/>
            <person name="Ono Y."/>
            <person name="Takiguchi S."/>
            <person name="Watanabe S."/>
            <person name="Yosida M."/>
            <person name="Hotuta T."/>
            <person name="Kusano J."/>
            <person name="Kanehori K."/>
            <person name="Takahashi-Fujii A."/>
            <person name="Hara H."/>
            <person name="Tanase T.-O."/>
            <person name="Nomura Y."/>
            <person name="Togiya S."/>
            <person name="Komai F."/>
            <person name="Hara R."/>
            <person name="Takeuchi K."/>
            <person name="Arita M."/>
            <person name="Imose N."/>
            <person name="Musashino K."/>
            <person name="Yuuki H."/>
            <person name="Oshima A."/>
            <person name="Sasaki N."/>
            <person name="Aotsuka S."/>
            <person name="Yoshikawa Y."/>
            <person name="Matsunawa H."/>
            <person name="Ichihara T."/>
            <person name="Shiohata N."/>
            <person name="Sano S."/>
            <person name="Moriya S."/>
            <person name="Momiyama H."/>
            <person name="Satoh N."/>
            <person name="Takami S."/>
            <person name="Terashima Y."/>
            <person name="Suzuki O."/>
            <person name="Nakagawa S."/>
            <person name="Senoh A."/>
            <person name="Mizoguchi H."/>
            <person name="Goto Y."/>
            <person name="Shimizu F."/>
            <person name="Wakebe H."/>
            <person name="Hishigaki H."/>
            <person name="Watanabe T."/>
            <person name="Sugiyama A."/>
            <person name="Takemoto M."/>
            <person name="Kawakami B."/>
            <person name="Yamazaki M."/>
            <person name="Watanabe K."/>
            <person name="Kumagai A."/>
            <person name="Itakura S."/>
            <person name="Fukuzumi Y."/>
            <person name="Fujimori Y."/>
            <person name="Komiyama M."/>
            <person name="Tashiro H."/>
            <person name="Tanigami A."/>
            <person name="Fujiwara T."/>
            <person name="Ono T."/>
            <person name="Yamada K."/>
            <person name="Fujii Y."/>
            <person name="Ozaki K."/>
            <person name="Hirao M."/>
            <person name="Ohmori Y."/>
            <person name="Kawabata A."/>
            <person name="Hikiji T."/>
            <person name="Kobatake N."/>
            <person name="Inagaki H."/>
            <person name="Ikema Y."/>
            <person name="Okamoto S."/>
            <person name="Okitani R."/>
            <person name="Kawakami T."/>
            <person name="Noguchi S."/>
            <person name="Itoh T."/>
            <person name="Shigeta K."/>
            <person name="Senba T."/>
            <person name="Matsumura K."/>
            <person name="Nakajima Y."/>
            <person name="Mizuno T."/>
            <person name="Morinaga M."/>
            <person name="Sasaki M."/>
            <person name="Togashi T."/>
            <person name="Oyama M."/>
            <person name="Hata H."/>
            <person name="Watanabe M."/>
            <person name="Komatsu T."/>
            <person name="Mizushima-Sugano J."/>
            <person name="Satoh T."/>
            <person name="Shirai Y."/>
            <person name="Takahashi Y."/>
            <person name="Nakagawa K."/>
            <person name="Okumura K."/>
            <person name="Nagase T."/>
            <person name="Nomura N."/>
            <person name="Kikuchi H."/>
            <person name="Masuho Y."/>
            <person name="Yamashita R."/>
            <person name="Nakai K."/>
            <person name="Yada T."/>
            <person name="Nakamura Y."/>
            <person name="Ohara O."/>
            <person name="Isogai T."/>
            <person name="Sugano S."/>
        </authorList>
    </citation>
    <scope>NUCLEOTIDE SEQUENCE [LARGE SCALE MRNA] (ISOFORMS 1 AND 2)</scope>
    <source>
        <tissue>Liver</tissue>
        <tissue>Synovium</tissue>
    </source>
</reference>
<reference key="4">
    <citation type="journal article" date="2004" name="Nature">
        <title>The sequence and analysis of duplication-rich human chromosome 16.</title>
        <authorList>
            <person name="Martin J."/>
            <person name="Han C."/>
            <person name="Gordon L.A."/>
            <person name="Terry A."/>
            <person name="Prabhakar S."/>
            <person name="She X."/>
            <person name="Xie G."/>
            <person name="Hellsten U."/>
            <person name="Chan Y.M."/>
            <person name="Altherr M."/>
            <person name="Couronne O."/>
            <person name="Aerts A."/>
            <person name="Bajorek E."/>
            <person name="Black S."/>
            <person name="Blumer H."/>
            <person name="Branscomb E."/>
            <person name="Brown N.C."/>
            <person name="Bruno W.J."/>
            <person name="Buckingham J.M."/>
            <person name="Callen D.F."/>
            <person name="Campbell C.S."/>
            <person name="Campbell M.L."/>
            <person name="Campbell E.W."/>
            <person name="Caoile C."/>
            <person name="Challacombe J.F."/>
            <person name="Chasteen L.A."/>
            <person name="Chertkov O."/>
            <person name="Chi H.C."/>
            <person name="Christensen M."/>
            <person name="Clark L.M."/>
            <person name="Cohn J.D."/>
            <person name="Denys M."/>
            <person name="Detter J.C."/>
            <person name="Dickson M."/>
            <person name="Dimitrijevic-Bussod M."/>
            <person name="Escobar J."/>
            <person name="Fawcett J.J."/>
            <person name="Flowers D."/>
            <person name="Fotopulos D."/>
            <person name="Glavina T."/>
            <person name="Gomez M."/>
            <person name="Gonzales E."/>
            <person name="Goodstein D."/>
            <person name="Goodwin L.A."/>
            <person name="Grady D.L."/>
            <person name="Grigoriev I."/>
            <person name="Groza M."/>
            <person name="Hammon N."/>
            <person name="Hawkins T."/>
            <person name="Haydu L."/>
            <person name="Hildebrand C.E."/>
            <person name="Huang W."/>
            <person name="Israni S."/>
            <person name="Jett J."/>
            <person name="Jewett P.B."/>
            <person name="Kadner K."/>
            <person name="Kimball H."/>
            <person name="Kobayashi A."/>
            <person name="Krawczyk M.-C."/>
            <person name="Leyba T."/>
            <person name="Longmire J.L."/>
            <person name="Lopez F."/>
            <person name="Lou Y."/>
            <person name="Lowry S."/>
            <person name="Ludeman T."/>
            <person name="Manohar C.F."/>
            <person name="Mark G.A."/>
            <person name="McMurray K.L."/>
            <person name="Meincke L.J."/>
            <person name="Morgan J."/>
            <person name="Moyzis R.K."/>
            <person name="Mundt M.O."/>
            <person name="Munk A.C."/>
            <person name="Nandkeshwar R.D."/>
            <person name="Pitluck S."/>
            <person name="Pollard M."/>
            <person name="Predki P."/>
            <person name="Parson-Quintana B."/>
            <person name="Ramirez L."/>
            <person name="Rash S."/>
            <person name="Retterer J."/>
            <person name="Ricke D.O."/>
            <person name="Robinson D.L."/>
            <person name="Rodriguez A."/>
            <person name="Salamov A."/>
            <person name="Saunders E.H."/>
            <person name="Scott D."/>
            <person name="Shough T."/>
            <person name="Stallings R.L."/>
            <person name="Stalvey M."/>
            <person name="Sutherland R.D."/>
            <person name="Tapia R."/>
            <person name="Tesmer J.G."/>
            <person name="Thayer N."/>
            <person name="Thompson L.S."/>
            <person name="Tice H."/>
            <person name="Torney D.C."/>
            <person name="Tran-Gyamfi M."/>
            <person name="Tsai M."/>
            <person name="Ulanovsky L.E."/>
            <person name="Ustaszewska A."/>
            <person name="Vo N."/>
            <person name="White P.S."/>
            <person name="Williams A.L."/>
            <person name="Wills P.L."/>
            <person name="Wu J.-R."/>
            <person name="Wu K."/>
            <person name="Yang J."/>
            <person name="DeJong P."/>
            <person name="Bruce D."/>
            <person name="Doggett N.A."/>
            <person name="Deaven L."/>
            <person name="Schmutz J."/>
            <person name="Grimwood J."/>
            <person name="Richardson P."/>
            <person name="Rokhsar D.S."/>
            <person name="Eichler E.E."/>
            <person name="Gilna P."/>
            <person name="Lucas S.M."/>
            <person name="Myers R.M."/>
            <person name="Rubin E.M."/>
            <person name="Pennacchio L.A."/>
        </authorList>
    </citation>
    <scope>NUCLEOTIDE SEQUENCE [LARGE SCALE GENOMIC DNA]</scope>
</reference>
<reference key="5">
    <citation type="submission" date="2005-07" db="EMBL/GenBank/DDBJ databases">
        <authorList>
            <person name="Mural R.J."/>
            <person name="Istrail S."/>
            <person name="Sutton G.G."/>
            <person name="Florea L."/>
            <person name="Halpern A.L."/>
            <person name="Mobarry C.M."/>
            <person name="Lippert R."/>
            <person name="Walenz B."/>
            <person name="Shatkay H."/>
            <person name="Dew I."/>
            <person name="Miller J.R."/>
            <person name="Flanigan M.J."/>
            <person name="Edwards N.J."/>
            <person name="Bolanos R."/>
            <person name="Fasulo D."/>
            <person name="Halldorsson B.V."/>
            <person name="Hannenhalli S."/>
            <person name="Turner R."/>
            <person name="Yooseph S."/>
            <person name="Lu F."/>
            <person name="Nusskern D.R."/>
            <person name="Shue B.C."/>
            <person name="Zheng X.H."/>
            <person name="Zhong F."/>
            <person name="Delcher A.L."/>
            <person name="Huson D.H."/>
            <person name="Kravitz S.A."/>
            <person name="Mouchard L."/>
            <person name="Reinert K."/>
            <person name="Remington K.A."/>
            <person name="Clark A.G."/>
            <person name="Waterman M.S."/>
            <person name="Eichler E.E."/>
            <person name="Adams M.D."/>
            <person name="Hunkapiller M.W."/>
            <person name="Myers E.W."/>
            <person name="Venter J.C."/>
        </authorList>
    </citation>
    <scope>NUCLEOTIDE SEQUENCE [LARGE SCALE GENOMIC DNA]</scope>
</reference>
<reference key="6">
    <citation type="journal article" date="2004" name="Genome Res.">
        <title>The status, quality, and expansion of the NIH full-length cDNA project: the Mammalian Gene Collection (MGC).</title>
        <authorList>
            <consortium name="The MGC Project Team"/>
        </authorList>
    </citation>
    <scope>NUCLEOTIDE SEQUENCE [LARGE SCALE MRNA] (ISOFORM 1)</scope>
    <source>
        <tissue>Brain</tissue>
        <tissue>Lymph</tissue>
        <tissue>Placenta</tissue>
    </source>
</reference>
<reference key="7">
    <citation type="submission" date="2003-05" db="EMBL/GenBank/DDBJ databases">
        <title>Cloning of human full-length CDSs in BD Creator(TM) system donor vector.</title>
        <authorList>
            <person name="Kalnine N."/>
            <person name="Chen X."/>
            <person name="Rolfs A."/>
            <person name="Halleck A."/>
            <person name="Hines L."/>
            <person name="Eisenstein S."/>
            <person name="Koundinya M."/>
            <person name="Raphael J."/>
            <person name="Moreira D."/>
            <person name="Kelley T."/>
            <person name="LaBaer J."/>
            <person name="Lin Y."/>
            <person name="Phelan M."/>
            <person name="Farmer A."/>
        </authorList>
    </citation>
    <scope>NUCLEOTIDE SEQUENCE [LARGE SCALE MRNA] OF 589-913 (ISOFORM 1)</scope>
</reference>
<reference key="8">
    <citation type="journal article" date="2003" name="Eur. J. Biochem.">
        <title>Characterization of eIF3k: a newly discovered subunit of mammalian translation initiation factor eIF3.</title>
        <authorList>
            <person name="Mayeur G.L."/>
            <person name="Fraser C.S."/>
            <person name="Peiretti F."/>
            <person name="Block K.L."/>
            <person name="Hershey J.W.B."/>
        </authorList>
    </citation>
    <scope>INTERACTION WITH EIF3B</scope>
</reference>
<reference key="9">
    <citation type="journal article" date="2005" name="Cell">
        <title>mTOR and S6K1 mediate assembly of the translation preinitiation complex through dynamic protein interchange and ordered phosphorylation events.</title>
        <authorList>
            <person name="Holz M.K."/>
            <person name="Ballif B.A."/>
            <person name="Gygi S.P."/>
            <person name="Blenis J."/>
        </authorList>
    </citation>
    <scope>INTERACTION WITH MTOR; RPTOR AND RPS6KB1</scope>
</reference>
<reference key="10">
    <citation type="journal article" date="2005" name="RNA">
        <title>Binding of eukaryotic initiation factor 3 to ribosomal 40S subunits and its role in ribosomal dissociation and anti-association.</title>
        <authorList>
            <person name="Kolupaeva V.G."/>
            <person name="Unbehaun A."/>
            <person name="Lomakin I.B."/>
            <person name="Hellen C.U.T."/>
            <person name="Pestova T.V."/>
        </authorList>
    </citation>
    <scope>CHARACTERIZATION OF THE EIF-3 COMPLEX</scope>
</reference>
<reference key="11">
    <citation type="journal article" date="2005" name="Virology">
        <title>Induction and mode of action of the viral stress-inducible murine proteins, P56 and P54.</title>
        <authorList>
            <person name="Terenzi F."/>
            <person name="Pal S."/>
            <person name="Sen G.C."/>
        </authorList>
    </citation>
    <scope>INTERACTION WITH IFIT1 AND IFIT2</scope>
</reference>
<reference key="12">
    <citation type="journal article" date="2006" name="J. Biol. Chem.">
        <title>Translation initiation factor eIF4G-1 binds to eIF3 through the eIF3e subunit.</title>
        <authorList>
            <person name="LeFebvre A.K."/>
            <person name="Korneeva N.L."/>
            <person name="Trutschl M."/>
            <person name="Cvek U."/>
            <person name="Duzan R.D."/>
            <person name="Bradley C.A."/>
            <person name="Hershey J.W.B."/>
            <person name="Rhoads R.E."/>
        </authorList>
    </citation>
    <scope>IDENTIFICATION IN THE EIF-3 COMPLEX</scope>
    <scope>IDENTIFICATION BY MASS SPECTROMETRY</scope>
</reference>
<reference key="13">
    <citation type="journal article" date="2006" name="J. Biol. Chem.">
        <title>Distinct induction patterns and functions of two closely related interferon-inducible human genes, ISG54 and ISG56.</title>
        <authorList>
            <person name="Terenzi F."/>
            <person name="Hui D.J."/>
            <person name="Merrick W.C."/>
            <person name="Sen G.C."/>
        </authorList>
    </citation>
    <scope>INTERACTION WITH IFIT2</scope>
</reference>
<reference key="14">
    <citation type="journal article" date="2007" name="EMBO J.">
        <title>Reconstitution reveals the functional core of mammalian eIF3.</title>
        <authorList>
            <person name="Masutani M."/>
            <person name="Sonenberg N."/>
            <person name="Yokoyama S."/>
            <person name="Imataka H."/>
        </authorList>
    </citation>
    <scope>FUNCTION</scope>
    <scope>CHARACTERIZATION OF THE EIF-3 COMPLEX</scope>
</reference>
<reference key="15">
    <citation type="journal article" date="2007" name="EMBO Rep.">
        <title>Human INT6/eIF3e is required for nonsense-mediated mRNA decay.</title>
        <authorList>
            <person name="Morris C."/>
            <person name="Wittmann J."/>
            <person name="Jaeck H.-M."/>
            <person name="Jalinot P."/>
        </authorList>
    </citation>
    <scope>INTERACTION WITH EIF3E</scope>
</reference>
<reference key="16">
    <citation type="journal article" date="2007" name="Mol. Cell. Proteomics">
        <title>Structural characterization of the human eukaryotic initiation factor 3 protein complex by mass spectrometry.</title>
        <authorList>
            <person name="Damoc E."/>
            <person name="Fraser C.S."/>
            <person name="Zhou M."/>
            <person name="Videler H."/>
            <person name="Mayeur G.L."/>
            <person name="Hershey J.W.B."/>
            <person name="Doudna J.A."/>
            <person name="Robinson C.V."/>
            <person name="Leary J.A."/>
        </authorList>
    </citation>
    <scope>IDENTIFICATION IN THE EIF-3 COMPLEX</scope>
    <scope>CHARACTERIZATION OF THE EIF-3 COMPLEX</scope>
    <scope>PHOSPHORYLATION AT SER-9; SER-11; SER-13; SER-15; SER-16; SER-18; SER-39; SER-166; THR-524 AND SER-909</scope>
    <scope>MASS SPECTROMETRY</scope>
</reference>
<reference key="17">
    <citation type="journal article" date="2008" name="Proc. Natl. Acad. Sci. U.S.A.">
        <title>Mass spectrometry reveals modularity and a complete subunit interaction map of the eukaryotic translation factor eIF3.</title>
        <authorList>
            <person name="Zhou M."/>
            <person name="Sandercock A.M."/>
            <person name="Fraser C.S."/>
            <person name="Ridlova G."/>
            <person name="Stephens E."/>
            <person name="Schenauer M.R."/>
            <person name="Yokoi-Fong T."/>
            <person name="Barsky D."/>
            <person name="Leary J.A."/>
            <person name="Hershey J.W.B."/>
            <person name="Doudna J.A."/>
            <person name="Robinson C.V."/>
        </authorList>
    </citation>
    <scope>IDENTIFICATION IN THE EIF-3 COMPLEX</scope>
    <scope>CHARACTERIZATION OF THE EIF-3 COMPLEX</scope>
    <scope>MASS SPECTROMETRY</scope>
</reference>
<reference key="18">
    <citation type="journal article" date="2009" name="RNA">
        <title>IGF2BP1 enhances HCV IRES-mediated translation initiation via the 3'UTR.</title>
        <authorList>
            <person name="Weinlich S."/>
            <person name="Huettelmaier S."/>
            <person name="Schierhorn A."/>
            <person name="Behrens S.-E."/>
            <person name="Ostareck-Lederer A."/>
            <person name="Ostareck D.H."/>
        </authorList>
    </citation>
    <scope>IDENTIFICATION IN A HCV IRES-MEDIATED TRANSLATION COMPLEX</scope>
</reference>
<reference key="19">
    <citation type="journal article" date="2011" name="BMC Syst. Biol.">
        <title>Initial characterization of the human central proteome.</title>
        <authorList>
            <person name="Burkard T.R."/>
            <person name="Planyavsky M."/>
            <person name="Kaupe I."/>
            <person name="Breitwieser F.P."/>
            <person name="Buerckstuemmer T."/>
            <person name="Bennett K.L."/>
            <person name="Superti-Furga G."/>
            <person name="Colinge J."/>
        </authorList>
    </citation>
    <scope>IDENTIFICATION BY MASS SPECTROMETRY [LARGE SCALE ANALYSIS]</scope>
</reference>
<reference key="20">
    <citation type="journal article" date="2012" name="PLoS ONE">
        <title>Human ALKBH4 interacts with proteins associated with transcription.</title>
        <authorList>
            <person name="Bjornstad L.G."/>
            <person name="Meza T.J."/>
            <person name="Otterlei M."/>
            <person name="Olafsrud S.M."/>
            <person name="Meza-Zepeda L.A."/>
            <person name="Falnes P.O."/>
        </authorList>
    </citation>
    <scope>INTERACTION WITH ALKBH4</scope>
</reference>
<reference key="21">
    <citation type="journal article" date="2015" name="Nature">
        <title>eIF3 targets cell-proliferation messenger RNAs for translational activation or repression.</title>
        <authorList>
            <person name="Lee A.S."/>
            <person name="Kranzusch P.J."/>
            <person name="Cate J.H."/>
        </authorList>
    </citation>
    <scope>FUNCTION</scope>
    <scope>IDENTIFICATION IN THE EIF-3 COMPLEX</scope>
</reference>
<reference key="22">
    <citation type="journal article" date="2016" name="Nature">
        <title>eIF3d is an mRNA cap-binding protein that is required for specialized translation initiation.</title>
        <authorList>
            <person name="Lee A.S."/>
            <person name="Kranzusch P.J."/>
            <person name="Doudna J.A."/>
            <person name="Cate J.H."/>
        </authorList>
    </citation>
    <scope>FUNCTION</scope>
</reference>
<reference key="23">
    <citation type="journal article" date="2021" name="Cell Rep.">
        <title>Human oncoprotein 5MP suppresses general and repeat-associated non-AUG translation via eIF3 by a common mechanism.</title>
        <authorList>
            <person name="Singh C.R."/>
            <person name="Glineburg M.R."/>
            <person name="Moore C."/>
            <person name="Tani N."/>
            <person name="Jaiswal R."/>
            <person name="Zou Y."/>
            <person name="Aube E."/>
            <person name="Gillaspie S."/>
            <person name="Thornton M."/>
            <person name="Cecil A."/>
            <person name="Hilgers M."/>
            <person name="Takasu A."/>
            <person name="Asano I."/>
            <person name="Asano M."/>
            <person name="Escalante C.R."/>
            <person name="Nakamura A."/>
            <person name="Todd P.K."/>
            <person name="Asano K."/>
        </authorList>
    </citation>
    <scope>INTERACTION WITH BZW2/5MP1</scope>
</reference>
<reference key="24">
    <citation type="journal article" date="2005" name="Science">
        <title>Structural roles for human translation factor eIF3 in initiation of protein synthesis.</title>
        <authorList>
            <person name="Siridechadilok B."/>
            <person name="Fraser C.S."/>
            <person name="Hall R.J."/>
            <person name="Doudna J.A."/>
            <person name="Nogales E."/>
        </authorList>
    </citation>
    <scope>3D-STRUCTURE MODELING</scope>
    <scope>ELECTRON MICROSCOPY</scope>
</reference>
<accession>Q99613</accession>
<accession>A8K7Z0</accession>
<accession>B2RXG3</accession>
<accession>B4E1D5</accession>
<accession>H3BRV0</accession>
<accession>O00215</accession>
<accession>Q9BW98</accession>
<gene>
    <name evidence="2" type="primary">EIF3C</name>
    <name evidence="2" type="synonym">EIF3S8</name>
</gene>
<feature type="chain" id="PRO_0000123525" description="Eukaryotic translation initiation factor 3 subunit C">
    <location>
        <begin position="1"/>
        <end position="913"/>
    </location>
</feature>
<feature type="domain" description="PCI" evidence="3">
    <location>
        <begin position="673"/>
        <end position="849"/>
    </location>
</feature>
<feature type="region of interest" description="Disordered" evidence="4">
    <location>
        <begin position="1"/>
        <end position="44"/>
    </location>
</feature>
<feature type="region of interest" description="Disordered" evidence="4">
    <location>
        <begin position="157"/>
        <end position="301"/>
    </location>
</feature>
<feature type="region of interest" description="Disordered" evidence="4">
    <location>
        <begin position="522"/>
        <end position="542"/>
    </location>
</feature>
<feature type="region of interest" description="Disordered" evidence="4">
    <location>
        <begin position="885"/>
        <end position="913"/>
    </location>
</feature>
<feature type="compositionally biased region" description="Low complexity" evidence="4">
    <location>
        <begin position="8"/>
        <end position="21"/>
    </location>
</feature>
<feature type="compositionally biased region" description="Acidic residues" evidence="4">
    <location>
        <begin position="166"/>
        <end position="190"/>
    </location>
</feature>
<feature type="compositionally biased region" description="Basic and acidic residues" evidence="4">
    <location>
        <begin position="199"/>
        <end position="216"/>
    </location>
</feature>
<feature type="compositionally biased region" description="Acidic residues" evidence="4">
    <location>
        <begin position="217"/>
        <end position="232"/>
    </location>
</feature>
<feature type="compositionally biased region" description="Basic and acidic residues" evidence="4">
    <location>
        <begin position="261"/>
        <end position="278"/>
    </location>
</feature>
<feature type="compositionally biased region" description="Polar residues" evidence="4">
    <location>
        <begin position="522"/>
        <end position="531"/>
    </location>
</feature>
<feature type="compositionally biased region" description="Basic and acidic residues" evidence="4">
    <location>
        <begin position="886"/>
        <end position="899"/>
    </location>
</feature>
<feature type="modified residue" description="Phosphoserine" evidence="2 10">
    <location>
        <position position="9"/>
    </location>
</feature>
<feature type="modified residue" description="Phosphoserine" evidence="2 10">
    <location>
        <position position="11"/>
    </location>
</feature>
<feature type="modified residue" description="Phosphoserine" evidence="2 10">
    <location>
        <position position="13"/>
    </location>
</feature>
<feature type="modified residue" description="Phosphoserine" evidence="2 10">
    <location>
        <position position="15"/>
    </location>
</feature>
<feature type="modified residue" description="Phosphoserine" evidence="2 10">
    <location>
        <position position="16"/>
    </location>
</feature>
<feature type="modified residue" description="Phosphoserine" evidence="2 10">
    <location>
        <position position="18"/>
    </location>
</feature>
<feature type="modified residue" description="Phosphoserine" evidence="2 10">
    <location>
        <position position="39"/>
    </location>
</feature>
<feature type="modified residue" description="N6-acetyllysine" evidence="1">
    <location>
        <position position="99"/>
    </location>
</feature>
<feature type="modified residue" description="Phosphoserine" evidence="2 10">
    <location>
        <position position="166"/>
    </location>
</feature>
<feature type="modified residue" description="Phosphoserine" evidence="1">
    <location>
        <position position="178"/>
    </location>
</feature>
<feature type="modified residue" description="Phosphoserine" evidence="1">
    <location>
        <position position="181"/>
    </location>
</feature>
<feature type="modified residue" description="Phosphoserine" evidence="1">
    <location>
        <position position="182"/>
    </location>
</feature>
<feature type="modified residue" description="Phosphothreonine" evidence="2 10">
    <location>
        <position position="524"/>
    </location>
</feature>
<feature type="modified residue" description="N6-acetyllysine" evidence="1">
    <location>
        <position position="643"/>
    </location>
</feature>
<feature type="modified residue" description="Phosphoserine" evidence="2 10">
    <location>
        <position position="909"/>
    </location>
</feature>
<feature type="splice variant" id="VSP_055472" description="In isoform 2." evidence="19">
    <location>
        <begin position="120"/>
        <end position="129"/>
    </location>
</feature>
<feature type="sequence conflict" description="In Ref. 2; AAC27674." evidence="20" ref="2">
    <original>EK</original>
    <variation>VR</variation>
    <location>
        <begin position="313"/>
        <end position="314"/>
    </location>
</feature>
<feature type="sequence conflict" description="In Ref. 3; BAG64747." evidence="20" ref="3">
    <original>V</original>
    <variation>A</variation>
    <location>
        <position position="737"/>
    </location>
</feature>
<feature type="helix" evidence="22">
    <location>
        <begin position="52"/>
        <end position="73"/>
    </location>
</feature>
<feature type="helix" evidence="22">
    <location>
        <begin position="76"/>
        <end position="93"/>
    </location>
</feature>
<feature type="turn" evidence="22">
    <location>
        <begin position="94"/>
        <end position="96"/>
    </location>
</feature>
<feature type="helix" evidence="22">
    <location>
        <begin position="97"/>
        <end position="100"/>
    </location>
</feature>
<feature type="helix" evidence="22">
    <location>
        <begin position="104"/>
        <end position="120"/>
    </location>
</feature>
<feature type="helix" evidence="22">
    <location>
        <begin position="124"/>
        <end position="127"/>
    </location>
</feature>
<feature type="strand" evidence="22">
    <location>
        <begin position="131"/>
        <end position="133"/>
    </location>
</feature>
<feature type="helix" evidence="22">
    <location>
        <begin position="134"/>
        <end position="149"/>
    </location>
</feature>
<feature type="helix" evidence="22">
    <location>
        <begin position="150"/>
        <end position="152"/>
    </location>
</feature>
<feature type="helix" evidence="22">
    <location>
        <begin position="153"/>
        <end position="159"/>
    </location>
</feature>
<feature type="helix" evidence="22">
    <location>
        <begin position="265"/>
        <end position="277"/>
    </location>
</feature>
<feature type="helix" evidence="22">
    <location>
        <begin position="288"/>
        <end position="295"/>
    </location>
</feature>
<feature type="strand" evidence="22">
    <location>
        <begin position="303"/>
        <end position="305"/>
    </location>
</feature>
<feature type="strand" evidence="21">
    <location>
        <begin position="315"/>
        <end position="318"/>
    </location>
</feature>
<feature type="strand" evidence="21">
    <location>
        <begin position="321"/>
        <end position="323"/>
    </location>
</feature>
<feature type="helix" evidence="21">
    <location>
        <begin position="328"/>
        <end position="337"/>
    </location>
</feature>
<feature type="helix" evidence="21">
    <location>
        <begin position="347"/>
        <end position="363"/>
    </location>
</feature>
<feature type="helix" evidence="21">
    <location>
        <begin position="368"/>
        <end position="383"/>
    </location>
</feature>
<feature type="strand" evidence="21">
    <location>
        <begin position="385"/>
        <end position="387"/>
    </location>
</feature>
<feature type="strand" evidence="21">
    <location>
        <begin position="389"/>
        <end position="391"/>
    </location>
</feature>
<feature type="helix" evidence="21">
    <location>
        <begin position="395"/>
        <end position="414"/>
    </location>
</feature>
<feature type="turn" evidence="21">
    <location>
        <begin position="420"/>
        <end position="423"/>
    </location>
</feature>
<feature type="strand" evidence="21">
    <location>
        <begin position="426"/>
        <end position="428"/>
    </location>
</feature>
<feature type="helix" evidence="21">
    <location>
        <begin position="444"/>
        <end position="460"/>
    </location>
</feature>
<feature type="strand" evidence="23">
    <location>
        <begin position="464"/>
        <end position="466"/>
    </location>
</feature>
<feature type="helix" evidence="21">
    <location>
        <begin position="467"/>
        <end position="473"/>
    </location>
</feature>
<feature type="helix" evidence="21">
    <location>
        <begin position="476"/>
        <end position="492"/>
    </location>
</feature>
<feature type="helix" evidence="21">
    <location>
        <begin position="496"/>
        <end position="507"/>
    </location>
</feature>
<feature type="strand" evidence="21">
    <location>
        <begin position="509"/>
        <end position="512"/>
    </location>
</feature>
<feature type="helix" evidence="21">
    <location>
        <begin position="516"/>
        <end position="519"/>
    </location>
</feature>
<feature type="helix" evidence="21">
    <location>
        <begin position="544"/>
        <end position="557"/>
    </location>
</feature>
<feature type="helix" evidence="21">
    <location>
        <begin position="564"/>
        <end position="578"/>
    </location>
</feature>
<feature type="turn" evidence="21">
    <location>
        <begin position="583"/>
        <end position="585"/>
    </location>
</feature>
<feature type="helix" evidence="21">
    <location>
        <begin position="586"/>
        <end position="592"/>
    </location>
</feature>
<feature type="turn" evidence="21">
    <location>
        <begin position="595"/>
        <end position="597"/>
    </location>
</feature>
<feature type="helix" evidence="21">
    <location>
        <begin position="598"/>
        <end position="600"/>
    </location>
</feature>
<feature type="helix" evidence="21">
    <location>
        <begin position="603"/>
        <end position="621"/>
    </location>
</feature>
<feature type="turn" evidence="21">
    <location>
        <begin position="622"/>
        <end position="624"/>
    </location>
</feature>
<feature type="helix" evidence="21">
    <location>
        <begin position="627"/>
        <end position="632"/>
    </location>
</feature>
<feature type="helix" evidence="21">
    <location>
        <begin position="634"/>
        <end position="637"/>
    </location>
</feature>
<feature type="helix" evidence="21">
    <location>
        <begin position="642"/>
        <end position="645"/>
    </location>
</feature>
<feature type="helix" evidence="21">
    <location>
        <begin position="652"/>
        <end position="654"/>
    </location>
</feature>
<feature type="helix" evidence="21">
    <location>
        <begin position="661"/>
        <end position="666"/>
    </location>
</feature>
<feature type="helix" evidence="23">
    <location>
        <begin position="673"/>
        <end position="675"/>
    </location>
</feature>
<feature type="helix" evidence="21">
    <location>
        <begin position="679"/>
        <end position="699"/>
    </location>
</feature>
<feature type="turn" evidence="21">
    <location>
        <begin position="700"/>
        <end position="702"/>
    </location>
</feature>
<feature type="strand" evidence="21">
    <location>
        <begin position="703"/>
        <end position="705"/>
    </location>
</feature>
<feature type="helix" evidence="21">
    <location>
        <begin position="713"/>
        <end position="722"/>
    </location>
</feature>
<feature type="strand" evidence="23">
    <location>
        <begin position="724"/>
        <end position="726"/>
    </location>
</feature>
<feature type="helix" evidence="21">
    <location>
        <begin position="733"/>
        <end position="742"/>
    </location>
</feature>
<feature type="turn" evidence="21">
    <location>
        <begin position="743"/>
        <end position="746"/>
    </location>
</feature>
<feature type="helix" evidence="21">
    <location>
        <begin position="750"/>
        <end position="756"/>
    </location>
</feature>
<feature type="helix" evidence="21">
    <location>
        <begin position="759"/>
        <end position="764"/>
    </location>
</feature>
<feature type="helix" evidence="21">
    <location>
        <begin position="766"/>
        <end position="768"/>
    </location>
</feature>
<feature type="strand" evidence="21">
    <location>
        <begin position="769"/>
        <end position="771"/>
    </location>
</feature>
<feature type="helix" evidence="21">
    <location>
        <begin position="772"/>
        <end position="794"/>
    </location>
</feature>
<feature type="turn" evidence="21">
    <location>
        <begin position="796"/>
        <end position="798"/>
    </location>
</feature>
<feature type="strand" evidence="21">
    <location>
        <begin position="799"/>
        <end position="803"/>
    </location>
</feature>
<feature type="turn" evidence="21">
    <location>
        <begin position="804"/>
        <end position="812"/>
    </location>
</feature>
<feature type="helix" evidence="21">
    <location>
        <begin position="815"/>
        <end position="824"/>
    </location>
</feature>
<feature type="strand" evidence="21">
    <location>
        <begin position="827"/>
        <end position="830"/>
    </location>
</feature>
<feature type="strand" evidence="21">
    <location>
        <begin position="832"/>
        <end position="835"/>
    </location>
</feature>
<feature type="turn" evidence="21">
    <location>
        <begin position="836"/>
        <end position="839"/>
    </location>
</feature>
<feature type="strand" evidence="21">
    <location>
        <begin position="840"/>
        <end position="843"/>
    </location>
</feature>
<feature type="strand" evidence="23">
    <location>
        <begin position="849"/>
        <end position="851"/>
    </location>
</feature>
<feature type="helix" evidence="21">
    <location>
        <begin position="852"/>
        <end position="859"/>
    </location>
</feature>